<keyword id="KW-0044">Antibiotic</keyword>
<keyword id="KW-0929">Antimicrobial</keyword>
<keyword id="KW-0211">Defensin</keyword>
<keyword id="KW-1015">Disulfide bond</keyword>
<keyword id="KW-1185">Reference proteome</keyword>
<keyword id="KW-0964">Secreted</keyword>
<keyword id="KW-0732">Signal</keyword>
<sequence>MTQLLLFLVALLVLGHVPSGRSEFKRCWKGQGACQTYCTRQETYMHLCPDASLCCLSYALKPPPVPKHEYE</sequence>
<feature type="signal peptide" evidence="2">
    <location>
        <begin position="1"/>
        <end position="22"/>
    </location>
</feature>
<feature type="chain" id="PRO_0000045352" description="Beta-defensin 124">
    <location>
        <begin position="23"/>
        <end position="71"/>
    </location>
</feature>
<feature type="disulfide bond" evidence="1">
    <location>
        <begin position="27"/>
        <end position="54"/>
    </location>
</feature>
<feature type="disulfide bond" evidence="1">
    <location>
        <begin position="34"/>
        <end position="48"/>
    </location>
</feature>
<feature type="disulfide bond" evidence="1">
    <location>
        <begin position="38"/>
        <end position="55"/>
    </location>
</feature>
<name>DB124_HUMAN</name>
<organism>
    <name type="scientific">Homo sapiens</name>
    <name type="common">Human</name>
    <dbReference type="NCBI Taxonomy" id="9606"/>
    <lineage>
        <taxon>Eukaryota</taxon>
        <taxon>Metazoa</taxon>
        <taxon>Chordata</taxon>
        <taxon>Craniata</taxon>
        <taxon>Vertebrata</taxon>
        <taxon>Euteleostomi</taxon>
        <taxon>Mammalia</taxon>
        <taxon>Eutheria</taxon>
        <taxon>Euarchontoglires</taxon>
        <taxon>Primates</taxon>
        <taxon>Haplorrhini</taxon>
        <taxon>Catarrhini</taxon>
        <taxon>Hominidae</taxon>
        <taxon>Homo</taxon>
    </lineage>
</organism>
<dbReference type="EMBL" id="DQ119827">
    <property type="protein sequence ID" value="AAZ81952.1"/>
    <property type="molecule type" value="mRNA"/>
</dbReference>
<dbReference type="EMBL" id="AL121751">
    <property type="status" value="NOT_ANNOTATED_CDS"/>
    <property type="molecule type" value="Genomic_DNA"/>
</dbReference>
<dbReference type="EMBL" id="AY122476">
    <property type="protein sequence ID" value="AAM93917.1"/>
    <property type="molecule type" value="mRNA"/>
</dbReference>
<dbReference type="CCDS" id="CCDS33457.1"/>
<dbReference type="RefSeq" id="NP_001032589.1">
    <property type="nucleotide sequence ID" value="NM_001037500.2"/>
</dbReference>
<dbReference type="SMR" id="Q8NES8"/>
<dbReference type="BioGRID" id="128850">
    <property type="interactions" value="4"/>
</dbReference>
<dbReference type="IntAct" id="Q8NES8">
    <property type="interactions" value="2"/>
</dbReference>
<dbReference type="STRING" id="9606.ENSP00000326309"/>
<dbReference type="BioMuta" id="DEFB124"/>
<dbReference type="DMDM" id="84028202"/>
<dbReference type="PaxDb" id="9606-ENSP00000326309"/>
<dbReference type="Antibodypedia" id="62850">
    <property type="antibodies" value="35 antibodies from 5 providers"/>
</dbReference>
<dbReference type="DNASU" id="245937"/>
<dbReference type="Ensembl" id="ENST00000317676.3">
    <property type="protein sequence ID" value="ENSP00000326309.2"/>
    <property type="gene ID" value="ENSG00000180383.4"/>
</dbReference>
<dbReference type="GeneID" id="245937"/>
<dbReference type="KEGG" id="hsa:245937"/>
<dbReference type="MANE-Select" id="ENST00000317676.3">
    <property type="protein sequence ID" value="ENSP00000326309.2"/>
    <property type="RefSeq nucleotide sequence ID" value="NM_001037500.2"/>
    <property type="RefSeq protein sequence ID" value="NP_001032589.1"/>
</dbReference>
<dbReference type="UCSC" id="uc002wvz.1">
    <property type="organism name" value="human"/>
</dbReference>
<dbReference type="AGR" id="HGNC:18104"/>
<dbReference type="CTD" id="245937"/>
<dbReference type="GeneCards" id="DEFB124"/>
<dbReference type="HGNC" id="HGNC:18104">
    <property type="gene designation" value="DEFB124"/>
</dbReference>
<dbReference type="HPA" id="ENSG00000180383">
    <property type="expression patterns" value="Tissue enhanced (fallopian tube, testis)"/>
</dbReference>
<dbReference type="neXtProt" id="NX_Q8NES8"/>
<dbReference type="OpenTargets" id="ENSG00000180383"/>
<dbReference type="PharmGKB" id="PA38500"/>
<dbReference type="VEuPathDB" id="HostDB:ENSG00000180383"/>
<dbReference type="eggNOG" id="ENOG502TF15">
    <property type="taxonomic scope" value="Eukaryota"/>
</dbReference>
<dbReference type="GeneTree" id="ENSGT00530000064308"/>
<dbReference type="HOGENOM" id="CLU_181906_4_0_1"/>
<dbReference type="InParanoid" id="Q8NES8"/>
<dbReference type="OMA" id="FMHLCPD"/>
<dbReference type="OrthoDB" id="9796954at2759"/>
<dbReference type="PAN-GO" id="Q8NES8">
    <property type="GO annotations" value="4 GO annotations based on evolutionary models"/>
</dbReference>
<dbReference type="PhylomeDB" id="Q8NES8"/>
<dbReference type="PathwayCommons" id="Q8NES8"/>
<dbReference type="Reactome" id="R-HSA-1461957">
    <property type="pathway name" value="Beta defensins"/>
</dbReference>
<dbReference type="Reactome" id="R-HSA-1461973">
    <property type="pathway name" value="Defensins"/>
</dbReference>
<dbReference type="SignaLink" id="Q8NES8"/>
<dbReference type="BioGRID-ORCS" id="245937">
    <property type="hits" value="11 hits in 1145 CRISPR screens"/>
</dbReference>
<dbReference type="GenomeRNAi" id="245937"/>
<dbReference type="Pharos" id="Q8NES8">
    <property type="development level" value="Tbio"/>
</dbReference>
<dbReference type="PRO" id="PR:Q8NES8"/>
<dbReference type="Proteomes" id="UP000005640">
    <property type="component" value="Chromosome 20"/>
</dbReference>
<dbReference type="RNAct" id="Q8NES8">
    <property type="molecule type" value="protein"/>
</dbReference>
<dbReference type="Bgee" id="ENSG00000180383">
    <property type="expression patterns" value="Expressed in right uterine tube and 107 other cell types or tissues"/>
</dbReference>
<dbReference type="GO" id="GO:0005576">
    <property type="term" value="C:extracellular region"/>
    <property type="evidence" value="ECO:0007669"/>
    <property type="project" value="UniProtKB-SubCell"/>
</dbReference>
<dbReference type="GO" id="GO:0042742">
    <property type="term" value="P:defense response to bacterium"/>
    <property type="evidence" value="ECO:0007669"/>
    <property type="project" value="UniProtKB-KW"/>
</dbReference>
<dbReference type="GO" id="GO:0045087">
    <property type="term" value="P:innate immune response"/>
    <property type="evidence" value="ECO:0007669"/>
    <property type="project" value="InterPro"/>
</dbReference>
<dbReference type="Gene3D" id="3.10.360.10">
    <property type="entry name" value="Antimicrobial Peptide, Beta-defensin 2, Chain A"/>
    <property type="match status" value="1"/>
</dbReference>
<dbReference type="InterPro" id="IPR025933">
    <property type="entry name" value="Beta_defensin_dom"/>
</dbReference>
<dbReference type="PANTHER" id="PTHR47897">
    <property type="entry name" value="BETA-DEFENSIN 124"/>
    <property type="match status" value="1"/>
</dbReference>
<dbReference type="PANTHER" id="PTHR47897:SF1">
    <property type="entry name" value="BETA-DEFENSIN 124"/>
    <property type="match status" value="1"/>
</dbReference>
<dbReference type="Pfam" id="PF13841">
    <property type="entry name" value="Defensin_beta_2"/>
    <property type="match status" value="1"/>
</dbReference>
<reference key="1">
    <citation type="journal article" date="2005" name="Physiol. Genomics">
        <title>Cross-species analysis of the mammalian beta-defensin gene family: presence of syntenic gene clusters and preferential expression in the male reproductive tract.</title>
        <authorList>
            <person name="Patil A.A."/>
            <person name="Cai Y."/>
            <person name="Sang Y."/>
            <person name="Blecha F."/>
            <person name="Zhang G."/>
        </authorList>
    </citation>
    <scope>NUCLEOTIDE SEQUENCE [MRNA]</scope>
</reference>
<reference key="2">
    <citation type="journal article" date="2001" name="Nature">
        <title>The DNA sequence and comparative analysis of human chromosome 20.</title>
        <authorList>
            <person name="Deloukas P."/>
            <person name="Matthews L.H."/>
            <person name="Ashurst J.L."/>
            <person name="Burton J."/>
            <person name="Gilbert J.G.R."/>
            <person name="Jones M."/>
            <person name="Stavrides G."/>
            <person name="Almeida J.P."/>
            <person name="Babbage A.K."/>
            <person name="Bagguley C.L."/>
            <person name="Bailey J."/>
            <person name="Barlow K.F."/>
            <person name="Bates K.N."/>
            <person name="Beard L.M."/>
            <person name="Beare D.M."/>
            <person name="Beasley O.P."/>
            <person name="Bird C.P."/>
            <person name="Blakey S.E."/>
            <person name="Bridgeman A.M."/>
            <person name="Brown A.J."/>
            <person name="Buck D."/>
            <person name="Burrill W.D."/>
            <person name="Butler A.P."/>
            <person name="Carder C."/>
            <person name="Carter N.P."/>
            <person name="Chapman J.C."/>
            <person name="Clamp M."/>
            <person name="Clark G."/>
            <person name="Clark L.N."/>
            <person name="Clark S.Y."/>
            <person name="Clee C.M."/>
            <person name="Clegg S."/>
            <person name="Cobley V.E."/>
            <person name="Collier R.E."/>
            <person name="Connor R.E."/>
            <person name="Corby N.R."/>
            <person name="Coulson A."/>
            <person name="Coville G.J."/>
            <person name="Deadman R."/>
            <person name="Dhami P.D."/>
            <person name="Dunn M."/>
            <person name="Ellington A.G."/>
            <person name="Frankland J.A."/>
            <person name="Fraser A."/>
            <person name="French L."/>
            <person name="Garner P."/>
            <person name="Grafham D.V."/>
            <person name="Griffiths C."/>
            <person name="Griffiths M.N.D."/>
            <person name="Gwilliam R."/>
            <person name="Hall R.E."/>
            <person name="Hammond S."/>
            <person name="Harley J.L."/>
            <person name="Heath P.D."/>
            <person name="Ho S."/>
            <person name="Holden J.L."/>
            <person name="Howden P.J."/>
            <person name="Huckle E."/>
            <person name="Hunt A.R."/>
            <person name="Hunt S.E."/>
            <person name="Jekosch K."/>
            <person name="Johnson C.M."/>
            <person name="Johnson D."/>
            <person name="Kay M.P."/>
            <person name="Kimberley A.M."/>
            <person name="King A."/>
            <person name="Knights A."/>
            <person name="Laird G.K."/>
            <person name="Lawlor S."/>
            <person name="Lehvaeslaiho M.H."/>
            <person name="Leversha M.A."/>
            <person name="Lloyd C."/>
            <person name="Lloyd D.M."/>
            <person name="Lovell J.D."/>
            <person name="Marsh V.L."/>
            <person name="Martin S.L."/>
            <person name="McConnachie L.J."/>
            <person name="McLay K."/>
            <person name="McMurray A.A."/>
            <person name="Milne S.A."/>
            <person name="Mistry D."/>
            <person name="Moore M.J.F."/>
            <person name="Mullikin J.C."/>
            <person name="Nickerson T."/>
            <person name="Oliver K."/>
            <person name="Parker A."/>
            <person name="Patel R."/>
            <person name="Pearce T.A.V."/>
            <person name="Peck A.I."/>
            <person name="Phillimore B.J.C.T."/>
            <person name="Prathalingam S.R."/>
            <person name="Plumb R.W."/>
            <person name="Ramsay H."/>
            <person name="Rice C.M."/>
            <person name="Ross M.T."/>
            <person name="Scott C.E."/>
            <person name="Sehra H.K."/>
            <person name="Shownkeen R."/>
            <person name="Sims S."/>
            <person name="Skuce C.D."/>
            <person name="Smith M.L."/>
            <person name="Soderlund C."/>
            <person name="Steward C.A."/>
            <person name="Sulston J.E."/>
            <person name="Swann R.M."/>
            <person name="Sycamore N."/>
            <person name="Taylor R."/>
            <person name="Tee L."/>
            <person name="Thomas D.W."/>
            <person name="Thorpe A."/>
            <person name="Tracey A."/>
            <person name="Tromans A.C."/>
            <person name="Vaudin M."/>
            <person name="Wall M."/>
            <person name="Wallis J.M."/>
            <person name="Whitehead S.L."/>
            <person name="Whittaker P."/>
            <person name="Willey D.L."/>
            <person name="Williams L."/>
            <person name="Williams S.A."/>
            <person name="Wilming L."/>
            <person name="Wray P.W."/>
            <person name="Hubbard T."/>
            <person name="Durbin R.M."/>
            <person name="Bentley D.R."/>
            <person name="Beck S."/>
            <person name="Rogers J."/>
        </authorList>
    </citation>
    <scope>NUCLEOTIDE SEQUENCE [LARGE SCALE GENOMIC DNA]</scope>
</reference>
<reference key="3">
    <citation type="journal article" date="2002" name="Proc. Natl. Acad. Sci. U.S.A.">
        <title>Discovery of five conserved beta-defensin gene clusters using a computational search strategy.</title>
        <authorList>
            <person name="Schutte B.C."/>
            <person name="Mitros J.P."/>
            <person name="Bartlett J.A."/>
            <person name="Walters J.D."/>
            <person name="Jia H.P."/>
            <person name="Welsh M.J."/>
            <person name="Casavant T.L."/>
            <person name="McCray P.B. Jr."/>
        </authorList>
    </citation>
    <scope>NUCLEOTIDE SEQUENCE [MRNA] OF 23-65</scope>
    <source>
        <tissue>Testis</tissue>
    </source>
</reference>
<proteinExistence type="evidence at protein level"/>
<evidence type="ECO:0000250" key="1"/>
<evidence type="ECO:0000255" key="2"/>
<evidence type="ECO:0000305" key="3"/>
<protein>
    <recommendedName>
        <fullName>Beta-defensin 124</fullName>
    </recommendedName>
    <alternativeName>
        <fullName>Beta-defensin 24</fullName>
        <shortName>DEFB-24</shortName>
    </alternativeName>
    <alternativeName>
        <fullName>Defensin, beta 124</fullName>
    </alternativeName>
</protein>
<comment type="function">
    <text evidence="3">Has antibacterial activity.</text>
</comment>
<comment type="interaction">
    <interactant intactId="EBI-12843376">
        <id>Q8NES8</id>
    </interactant>
    <interactant intactId="EBI-713635">
        <id>O43639</id>
        <label>NCK2</label>
    </interactant>
    <organismsDiffer>false</organismsDiffer>
    <experiments>3</experiments>
</comment>
<comment type="interaction">
    <interactant intactId="EBI-12843376">
        <id>Q8NES8</id>
    </interactant>
    <interactant intactId="EBI-1045534">
        <id>O00264</id>
        <label>PGRMC1</label>
    </interactant>
    <organismsDiffer>false</organismsDiffer>
    <experiments>3</experiments>
</comment>
<comment type="subcellular location">
    <subcellularLocation>
        <location evidence="3">Secreted</location>
    </subcellularLocation>
</comment>
<comment type="similarity">
    <text evidence="3">Belongs to the beta-defensin family.</text>
</comment>
<gene>
    <name type="primary">DEFB124</name>
    <name type="synonym">DEFB24</name>
</gene>
<accession>Q8NES8</accession>
<accession>Q30E74</accession>